<proteinExistence type="inferred from homology"/>
<gene>
    <name evidence="1" type="primary">nrdR</name>
    <name type="ordered locus">AZC_1262</name>
</gene>
<organism>
    <name type="scientific">Azorhizobium caulinodans (strain ATCC 43989 / DSM 5975 / JCM 20966 / LMG 6465 / NBRC 14845 / NCIMB 13405 / ORS 571)</name>
    <dbReference type="NCBI Taxonomy" id="438753"/>
    <lineage>
        <taxon>Bacteria</taxon>
        <taxon>Pseudomonadati</taxon>
        <taxon>Pseudomonadota</taxon>
        <taxon>Alphaproteobacteria</taxon>
        <taxon>Hyphomicrobiales</taxon>
        <taxon>Xanthobacteraceae</taxon>
        <taxon>Azorhizobium</taxon>
    </lineage>
</organism>
<evidence type="ECO:0000255" key="1">
    <source>
        <dbReference type="HAMAP-Rule" id="MF_00440"/>
    </source>
</evidence>
<feature type="chain" id="PRO_1000080709" description="Transcriptional repressor NrdR">
    <location>
        <begin position="1"/>
        <end position="173"/>
    </location>
</feature>
<feature type="domain" description="ATP-cone" evidence="1">
    <location>
        <begin position="49"/>
        <end position="139"/>
    </location>
</feature>
<feature type="zinc finger region" evidence="1">
    <location>
        <begin position="3"/>
        <end position="34"/>
    </location>
</feature>
<dbReference type="EMBL" id="AP009384">
    <property type="protein sequence ID" value="BAF87260.1"/>
    <property type="molecule type" value="Genomic_DNA"/>
</dbReference>
<dbReference type="RefSeq" id="WP_012169793.1">
    <property type="nucleotide sequence ID" value="NC_009937.1"/>
</dbReference>
<dbReference type="SMR" id="A8I0I5"/>
<dbReference type="STRING" id="438753.AZC_1262"/>
<dbReference type="KEGG" id="azc:AZC_1262"/>
<dbReference type="eggNOG" id="COG1327">
    <property type="taxonomic scope" value="Bacteria"/>
</dbReference>
<dbReference type="HOGENOM" id="CLU_108412_0_1_5"/>
<dbReference type="Proteomes" id="UP000000270">
    <property type="component" value="Chromosome"/>
</dbReference>
<dbReference type="GO" id="GO:0005524">
    <property type="term" value="F:ATP binding"/>
    <property type="evidence" value="ECO:0007669"/>
    <property type="project" value="UniProtKB-KW"/>
</dbReference>
<dbReference type="GO" id="GO:0003677">
    <property type="term" value="F:DNA binding"/>
    <property type="evidence" value="ECO:0007669"/>
    <property type="project" value="UniProtKB-KW"/>
</dbReference>
<dbReference type="GO" id="GO:0008270">
    <property type="term" value="F:zinc ion binding"/>
    <property type="evidence" value="ECO:0007669"/>
    <property type="project" value="UniProtKB-UniRule"/>
</dbReference>
<dbReference type="GO" id="GO:0045892">
    <property type="term" value="P:negative regulation of DNA-templated transcription"/>
    <property type="evidence" value="ECO:0007669"/>
    <property type="project" value="UniProtKB-UniRule"/>
</dbReference>
<dbReference type="HAMAP" id="MF_00440">
    <property type="entry name" value="NrdR"/>
    <property type="match status" value="1"/>
</dbReference>
<dbReference type="InterPro" id="IPR005144">
    <property type="entry name" value="ATP-cone_dom"/>
</dbReference>
<dbReference type="InterPro" id="IPR055173">
    <property type="entry name" value="NrdR-like_N"/>
</dbReference>
<dbReference type="InterPro" id="IPR003796">
    <property type="entry name" value="RNR_NrdR-like"/>
</dbReference>
<dbReference type="NCBIfam" id="TIGR00244">
    <property type="entry name" value="transcriptional regulator NrdR"/>
    <property type="match status" value="1"/>
</dbReference>
<dbReference type="PANTHER" id="PTHR30455">
    <property type="entry name" value="TRANSCRIPTIONAL REPRESSOR NRDR"/>
    <property type="match status" value="1"/>
</dbReference>
<dbReference type="PANTHER" id="PTHR30455:SF2">
    <property type="entry name" value="TRANSCRIPTIONAL REPRESSOR NRDR"/>
    <property type="match status" value="1"/>
</dbReference>
<dbReference type="Pfam" id="PF03477">
    <property type="entry name" value="ATP-cone"/>
    <property type="match status" value="1"/>
</dbReference>
<dbReference type="Pfam" id="PF22811">
    <property type="entry name" value="Zn_ribbon_NrdR"/>
    <property type="match status" value="1"/>
</dbReference>
<dbReference type="PROSITE" id="PS51161">
    <property type="entry name" value="ATP_CONE"/>
    <property type="match status" value="1"/>
</dbReference>
<keyword id="KW-0067">ATP-binding</keyword>
<keyword id="KW-0238">DNA-binding</keyword>
<keyword id="KW-0479">Metal-binding</keyword>
<keyword id="KW-0547">Nucleotide-binding</keyword>
<keyword id="KW-1185">Reference proteome</keyword>
<keyword id="KW-0678">Repressor</keyword>
<keyword id="KW-0804">Transcription</keyword>
<keyword id="KW-0805">Transcription regulation</keyword>
<keyword id="KW-0862">Zinc</keyword>
<keyword id="KW-0863">Zinc-finger</keyword>
<accession>A8I0I5</accession>
<sequence length="173" mass="19989">MRCPYCGSLDTQVKDSRPTEDNTAIRRRRVCPDCGGRFTTFERVQLRELMVVKRSGRRVPFDRDKLARSVEIALRKRPVETERVERMLSGLVRQLESLGDTEITSETIGEMVMEGLKQIDDVAYVRFASVYRNFREARDFESLLDELQLGERKAEALAKLKRADRTASESEPE</sequence>
<name>NRDR_AZOC5</name>
<protein>
    <recommendedName>
        <fullName evidence="1">Transcriptional repressor NrdR</fullName>
    </recommendedName>
</protein>
<comment type="function">
    <text evidence="1">Negatively regulates transcription of bacterial ribonucleotide reductase nrd genes and operons by binding to NrdR-boxes.</text>
</comment>
<comment type="cofactor">
    <cofactor evidence="1">
        <name>Zn(2+)</name>
        <dbReference type="ChEBI" id="CHEBI:29105"/>
    </cofactor>
    <text evidence="1">Binds 1 zinc ion.</text>
</comment>
<comment type="similarity">
    <text evidence="1">Belongs to the NrdR family.</text>
</comment>
<reference key="1">
    <citation type="submission" date="2007-04" db="EMBL/GenBank/DDBJ databases">
        <title>Complete genome sequence of the nitrogen-fixing bacterium Azorhizobium caulinodans ORS571.</title>
        <authorList>
            <person name="Lee K.B."/>
            <person name="Backer P.D."/>
            <person name="Aono T."/>
            <person name="Liu C.T."/>
            <person name="Suzuki S."/>
            <person name="Suzuki T."/>
            <person name="Kaneko T."/>
            <person name="Yamada M."/>
            <person name="Tabata S."/>
            <person name="Kupfer D.M."/>
            <person name="Najar F.Z."/>
            <person name="Wiley G.B."/>
            <person name="Roe B."/>
            <person name="Binnewies T."/>
            <person name="Ussery D."/>
            <person name="Vereecke D."/>
            <person name="Gevers D."/>
            <person name="Holsters M."/>
            <person name="Oyaizu H."/>
        </authorList>
    </citation>
    <scope>NUCLEOTIDE SEQUENCE [LARGE SCALE GENOMIC DNA]</scope>
    <source>
        <strain>ATCC 43989 / DSM 5975 / JCM 20966 / LMG 6465 / NBRC 14845 / NCIMB 13405 / ORS 571</strain>
    </source>
</reference>